<evidence type="ECO:0000250" key="1"/>
<evidence type="ECO:0000255" key="2"/>
<evidence type="ECO:0000305" key="3"/>
<name>NU4C1_SYNY3</name>
<proteinExistence type="inferred from homology"/>
<comment type="function">
    <text>NDH-1 shuttles electrons from NAD(P)H, via FMN and iron-sulfur (Fe-S) centers, to quinones in the respiratory chain. The immediate electron acceptor for the enzyme in this species is believed to be plastoquinone. Couples the redox reaction to proton translocation (for every two electrons transferred, four hydrogen ions are translocated across the cytoplasmic membrane), and thus conserves the redox energy in a proton gradient.</text>
</comment>
<comment type="catalytic activity">
    <reaction>
        <text>a plastoquinone + NADH + (n+1) H(+)(in) = a plastoquinol + NAD(+) + n H(+)(out)</text>
        <dbReference type="Rhea" id="RHEA:42608"/>
        <dbReference type="Rhea" id="RHEA-COMP:9561"/>
        <dbReference type="Rhea" id="RHEA-COMP:9562"/>
        <dbReference type="ChEBI" id="CHEBI:15378"/>
        <dbReference type="ChEBI" id="CHEBI:17757"/>
        <dbReference type="ChEBI" id="CHEBI:57540"/>
        <dbReference type="ChEBI" id="CHEBI:57945"/>
        <dbReference type="ChEBI" id="CHEBI:62192"/>
    </reaction>
</comment>
<comment type="catalytic activity">
    <reaction>
        <text>a plastoquinone + NADPH + (n+1) H(+)(in) = a plastoquinol + NADP(+) + n H(+)(out)</text>
        <dbReference type="Rhea" id="RHEA:42612"/>
        <dbReference type="Rhea" id="RHEA-COMP:9561"/>
        <dbReference type="Rhea" id="RHEA-COMP:9562"/>
        <dbReference type="ChEBI" id="CHEBI:15378"/>
        <dbReference type="ChEBI" id="CHEBI:17757"/>
        <dbReference type="ChEBI" id="CHEBI:57783"/>
        <dbReference type="ChEBI" id="CHEBI:58349"/>
        <dbReference type="ChEBI" id="CHEBI:62192"/>
    </reaction>
</comment>
<comment type="subcellular location">
    <subcellularLocation>
        <location evidence="1">Cellular thylakoid membrane</location>
        <topology evidence="1">Multi-pass membrane protein</topology>
    </subcellularLocation>
</comment>
<comment type="similarity">
    <text evidence="3">Belongs to the complex I subunit 4 family.</text>
</comment>
<organism>
    <name type="scientific">Synechocystis sp. (strain ATCC 27184 / PCC 6803 / Kazusa)</name>
    <dbReference type="NCBI Taxonomy" id="1111708"/>
    <lineage>
        <taxon>Bacteria</taxon>
        <taxon>Bacillati</taxon>
        <taxon>Cyanobacteriota</taxon>
        <taxon>Cyanophyceae</taxon>
        <taxon>Synechococcales</taxon>
        <taxon>Merismopediaceae</taxon>
        <taxon>Synechocystis</taxon>
    </lineage>
</organism>
<protein>
    <recommendedName>
        <fullName>NAD(P)H-quinone oxidoreductase chain 4-1</fullName>
        <ecNumber>7.1.1.-</ecNumber>
    </recommendedName>
    <alternativeName>
        <fullName>NAD(P)H dehydrogenase I, subunit D-1</fullName>
    </alternativeName>
    <alternativeName>
        <fullName>NDH-1, chain 4-1</fullName>
    </alternativeName>
</protein>
<feature type="chain" id="PRO_0000118035" description="NAD(P)H-quinone oxidoreductase chain 4-1">
    <location>
        <begin position="1"/>
        <end position="525"/>
    </location>
</feature>
<feature type="transmembrane region" description="Helical" evidence="2">
    <location>
        <begin position="4"/>
        <end position="24"/>
    </location>
</feature>
<feature type="transmembrane region" description="Helical" evidence="2">
    <location>
        <begin position="37"/>
        <end position="57"/>
    </location>
</feature>
<feature type="transmembrane region" description="Helical" evidence="2">
    <location>
        <begin position="89"/>
        <end position="109"/>
    </location>
</feature>
<feature type="transmembrane region" description="Helical" evidence="2">
    <location>
        <begin position="111"/>
        <end position="131"/>
    </location>
</feature>
<feature type="transmembrane region" description="Helical" evidence="2">
    <location>
        <begin position="134"/>
        <end position="154"/>
    </location>
</feature>
<feature type="transmembrane region" description="Helical" evidence="2">
    <location>
        <begin position="167"/>
        <end position="187"/>
    </location>
</feature>
<feature type="transmembrane region" description="Helical" evidence="2">
    <location>
        <begin position="210"/>
        <end position="230"/>
    </location>
</feature>
<feature type="transmembrane region" description="Helical" evidence="2">
    <location>
        <begin position="241"/>
        <end position="261"/>
    </location>
</feature>
<feature type="transmembrane region" description="Helical" evidence="2">
    <location>
        <begin position="273"/>
        <end position="293"/>
    </location>
</feature>
<feature type="transmembrane region" description="Helical" evidence="2">
    <location>
        <begin position="309"/>
        <end position="329"/>
    </location>
</feature>
<feature type="transmembrane region" description="Helical" evidence="2">
    <location>
        <begin position="330"/>
        <end position="350"/>
    </location>
</feature>
<feature type="transmembrane region" description="Helical" evidence="2">
    <location>
        <begin position="385"/>
        <end position="405"/>
    </location>
</feature>
<feature type="transmembrane region" description="Helical" evidence="2">
    <location>
        <begin position="416"/>
        <end position="436"/>
    </location>
</feature>
<feature type="transmembrane region" description="Helical" evidence="2">
    <location>
        <begin position="462"/>
        <end position="482"/>
    </location>
</feature>
<reference key="1">
    <citation type="journal article" date="1992" name="Plant Mol. Biol.">
        <title>Cloning and transcription analysis of the ndh(A-I-G-E) gene cluster and the ndhD gene of the cyanobacterium Synechocystis sp. PCC6803.</title>
        <authorList>
            <person name="Ellersiek U."/>
            <person name="Steinmueller K."/>
        </authorList>
    </citation>
    <scope>NUCLEOTIDE SEQUENCE [GENOMIC DNA]</scope>
</reference>
<reference key="2">
    <citation type="journal article" date="1995" name="DNA Res.">
        <title>Sequence analysis of the genome of the unicellular cyanobacterium Synechocystis sp. strain PCC6803. I. Sequence features in the 1 Mb region from map positions 64% to 92% of the genome.</title>
        <authorList>
            <person name="Kaneko T."/>
            <person name="Tanaka A."/>
            <person name="Sato S."/>
            <person name="Kotani H."/>
            <person name="Sazuka T."/>
            <person name="Miyajima N."/>
            <person name="Sugiura M."/>
            <person name="Tabata S."/>
        </authorList>
    </citation>
    <scope>NUCLEOTIDE SEQUENCE [LARGE SCALE GENOMIC DNA]</scope>
    <source>
        <strain>ATCC 27184 / PCC 6803 / N-1</strain>
    </source>
</reference>
<reference key="3">
    <citation type="journal article" date="1996" name="DNA Res.">
        <title>Sequence analysis of the genome of the unicellular cyanobacterium Synechocystis sp. strain PCC6803. II. Sequence determination of the entire genome and assignment of potential protein-coding regions.</title>
        <authorList>
            <person name="Kaneko T."/>
            <person name="Sato S."/>
            <person name="Kotani H."/>
            <person name="Tanaka A."/>
            <person name="Asamizu E."/>
            <person name="Nakamura Y."/>
            <person name="Miyajima N."/>
            <person name="Hirosawa M."/>
            <person name="Sugiura M."/>
            <person name="Sasamoto S."/>
            <person name="Kimura T."/>
            <person name="Hosouchi T."/>
            <person name="Matsuno A."/>
            <person name="Muraki A."/>
            <person name="Nakazaki N."/>
            <person name="Naruo K."/>
            <person name="Okumura S."/>
            <person name="Shimpo S."/>
            <person name="Takeuchi C."/>
            <person name="Wada T."/>
            <person name="Watanabe A."/>
            <person name="Yamada M."/>
            <person name="Yasuda M."/>
            <person name="Tabata S."/>
        </authorList>
    </citation>
    <scope>NUCLEOTIDE SEQUENCE [LARGE SCALE GENOMIC DNA]</scope>
    <source>
        <strain>ATCC 27184 / PCC 6803 / Kazusa</strain>
    </source>
</reference>
<accession>P32421</accession>
<dbReference type="EC" id="7.1.1.-"/>
<dbReference type="EMBL" id="X65170">
    <property type="protein sequence ID" value="CAA46289.1"/>
    <property type="molecule type" value="Genomic_DNA"/>
</dbReference>
<dbReference type="EMBL" id="BA000022">
    <property type="protein sequence ID" value="BAA10037.1"/>
    <property type="molecule type" value="Genomic_DNA"/>
</dbReference>
<dbReference type="PIR" id="S28891">
    <property type="entry name" value="S28891"/>
</dbReference>
<dbReference type="SMR" id="P32421"/>
<dbReference type="IntAct" id="P32421">
    <property type="interactions" value="4"/>
</dbReference>
<dbReference type="STRING" id="1148.gene:10499529"/>
<dbReference type="PaxDb" id="1148-1001415"/>
<dbReference type="EnsemblBacteria" id="BAA10037">
    <property type="protein sequence ID" value="BAA10037"/>
    <property type="gene ID" value="BAA10037"/>
</dbReference>
<dbReference type="KEGG" id="syn:slr0331"/>
<dbReference type="eggNOG" id="COG1008">
    <property type="taxonomic scope" value="Bacteria"/>
</dbReference>
<dbReference type="InParanoid" id="P32421"/>
<dbReference type="PhylomeDB" id="P32421"/>
<dbReference type="Proteomes" id="UP000001425">
    <property type="component" value="Chromosome"/>
</dbReference>
<dbReference type="GO" id="GO:0031676">
    <property type="term" value="C:plasma membrane-derived thylakoid membrane"/>
    <property type="evidence" value="ECO:0007669"/>
    <property type="project" value="UniProtKB-SubCell"/>
</dbReference>
<dbReference type="GO" id="GO:0008137">
    <property type="term" value="F:NADH dehydrogenase (ubiquinone) activity"/>
    <property type="evidence" value="ECO:0007669"/>
    <property type="project" value="InterPro"/>
</dbReference>
<dbReference type="GO" id="GO:0048039">
    <property type="term" value="F:ubiquinone binding"/>
    <property type="evidence" value="ECO:0000318"/>
    <property type="project" value="GO_Central"/>
</dbReference>
<dbReference type="GO" id="GO:0009060">
    <property type="term" value="P:aerobic respiration"/>
    <property type="evidence" value="ECO:0000318"/>
    <property type="project" value="GO_Central"/>
</dbReference>
<dbReference type="GO" id="GO:0042773">
    <property type="term" value="P:ATP synthesis coupled electron transport"/>
    <property type="evidence" value="ECO:0007669"/>
    <property type="project" value="InterPro"/>
</dbReference>
<dbReference type="GO" id="GO:0015990">
    <property type="term" value="P:electron transport coupled proton transport"/>
    <property type="evidence" value="ECO:0000318"/>
    <property type="project" value="GO_Central"/>
</dbReference>
<dbReference type="HAMAP" id="MF_00491">
    <property type="entry name" value="NDH1_NuoM"/>
    <property type="match status" value="1"/>
</dbReference>
<dbReference type="InterPro" id="IPR022997">
    <property type="entry name" value="NADH_Q_OxRdtase_chain4"/>
</dbReference>
<dbReference type="InterPro" id="IPR010227">
    <property type="entry name" value="NADH_Q_OxRdtase_chainM/4"/>
</dbReference>
<dbReference type="InterPro" id="IPR003918">
    <property type="entry name" value="NADH_UbQ_OxRdtase"/>
</dbReference>
<dbReference type="InterPro" id="IPR001750">
    <property type="entry name" value="ND/Mrp_TM"/>
</dbReference>
<dbReference type="NCBIfam" id="TIGR01972">
    <property type="entry name" value="NDH_I_M"/>
    <property type="match status" value="1"/>
</dbReference>
<dbReference type="NCBIfam" id="NF002713">
    <property type="entry name" value="PRK02546.1"/>
    <property type="match status" value="1"/>
</dbReference>
<dbReference type="NCBIfam" id="NF009212">
    <property type="entry name" value="PRK12561.1"/>
    <property type="match status" value="1"/>
</dbReference>
<dbReference type="PANTHER" id="PTHR43507:SF21">
    <property type="entry name" value="NAD(P)H-QUINONE OXIDOREDUCTASE CHAIN 4, CHLOROPLASTIC"/>
    <property type="match status" value="1"/>
</dbReference>
<dbReference type="PANTHER" id="PTHR43507">
    <property type="entry name" value="NADH-UBIQUINONE OXIDOREDUCTASE CHAIN 4"/>
    <property type="match status" value="1"/>
</dbReference>
<dbReference type="Pfam" id="PF00361">
    <property type="entry name" value="Proton_antipo_M"/>
    <property type="match status" value="1"/>
</dbReference>
<dbReference type="PRINTS" id="PR01437">
    <property type="entry name" value="NUOXDRDTASE4"/>
</dbReference>
<gene>
    <name type="primary">ndhD1</name>
    <name type="synonym">ndhD</name>
    <name type="ordered locus">slr0331</name>
</gene>
<sequence length="525" mass="57511">MNTFPWLTTIILLPIVAALFIPIIPDKDGKTVRWYSLAVGLVDFALIVYAFYSGFDLSEPGLQLVESYTWLPQIDLKWSVGADGLSMPLIILTGFITTLATMAAWPVTLKPKLFYFLMLLMYGGQIAVFAVQDILLFFLVWELELVPVYLILSIWGGKKRLYAATKFILYTAGGSLFILLAGLTLAFYGDVNTFDMSAIAAKDIPVNLQLLLYAGFLIAYGVKLPIFPLHTWLPDAHGEATAPAHMLLAGILLKMGGYALLRMNVGMLPDAHAVFAPVLVILGVVNIIYAAFTSFAQRNLKRKIAYSSISHMGFVLIGLASFTDLGMSGAMLQMISHGLIGASLFFMVGATYDRTHTLMLDEMGGIGQKMKKGFAMWTACSLASLALPGMSGFVAELMVFVGFATSDAYNLVFRTIVVVLMGVGVILTPIYLLSMLREMLYGPENEELVNHTNLVDVEPREVFIIGCLLVPIIGIGFYPKLITQIYDPTINQLVQTARRSVPSLVQQANLSPLEVTALRPPTIGF</sequence>
<keyword id="KW-0472">Membrane</keyword>
<keyword id="KW-0520">NAD</keyword>
<keyword id="KW-0521">NADP</keyword>
<keyword id="KW-0618">Plastoquinone</keyword>
<keyword id="KW-0874">Quinone</keyword>
<keyword id="KW-1185">Reference proteome</keyword>
<keyword id="KW-0793">Thylakoid</keyword>
<keyword id="KW-1278">Translocase</keyword>
<keyword id="KW-0812">Transmembrane</keyword>
<keyword id="KW-1133">Transmembrane helix</keyword>